<reference key="1">
    <citation type="submission" date="2007-06" db="EMBL/GenBank/DDBJ databases">
        <authorList>
            <person name="Brinkac L.M."/>
            <person name="Daugherty S."/>
            <person name="Dodson R.J."/>
            <person name="Madupu R."/>
            <person name="Brown J.L."/>
            <person name="Bruce D."/>
            <person name="Detter C."/>
            <person name="Munk C."/>
            <person name="Smith L.A."/>
            <person name="Smith T.J."/>
            <person name="White O."/>
            <person name="Brettin T.S."/>
        </authorList>
    </citation>
    <scope>NUCLEOTIDE SEQUENCE [LARGE SCALE GENOMIC DNA]</scope>
    <source>
        <strain>Langeland / NCTC 10281 / Type F</strain>
    </source>
</reference>
<protein>
    <recommendedName>
        <fullName evidence="1">D-aminoacyl-tRNA deacylase</fullName>
        <shortName evidence="1">DTD</shortName>
        <ecNumber evidence="1">3.1.1.96</ecNumber>
    </recommendedName>
    <alternativeName>
        <fullName evidence="1">Gly-tRNA(Ala) deacylase</fullName>
    </alternativeName>
</protein>
<evidence type="ECO:0000255" key="1">
    <source>
        <dbReference type="HAMAP-Rule" id="MF_00518"/>
    </source>
</evidence>
<organism>
    <name type="scientific">Clostridium botulinum (strain Langeland / NCTC 10281 / Type F)</name>
    <dbReference type="NCBI Taxonomy" id="441772"/>
    <lineage>
        <taxon>Bacteria</taxon>
        <taxon>Bacillati</taxon>
        <taxon>Bacillota</taxon>
        <taxon>Clostridia</taxon>
        <taxon>Eubacteriales</taxon>
        <taxon>Clostridiaceae</taxon>
        <taxon>Clostridium</taxon>
    </lineage>
</organism>
<gene>
    <name evidence="1" type="primary">dtd</name>
    <name type="ordered locus">CLI_3117</name>
</gene>
<dbReference type="EC" id="3.1.1.96" evidence="1"/>
<dbReference type="EMBL" id="CP000728">
    <property type="protein sequence ID" value="ABS39974.1"/>
    <property type="molecule type" value="Genomic_DNA"/>
</dbReference>
<dbReference type="RefSeq" id="WP_003357859.1">
    <property type="nucleotide sequence ID" value="NC_009699.1"/>
</dbReference>
<dbReference type="SMR" id="A7GHS6"/>
<dbReference type="KEGG" id="cbf:CLI_3117"/>
<dbReference type="HOGENOM" id="CLU_076901_1_0_9"/>
<dbReference type="Proteomes" id="UP000002410">
    <property type="component" value="Chromosome"/>
</dbReference>
<dbReference type="GO" id="GO:0005737">
    <property type="term" value="C:cytoplasm"/>
    <property type="evidence" value="ECO:0007669"/>
    <property type="project" value="UniProtKB-SubCell"/>
</dbReference>
<dbReference type="GO" id="GO:0051500">
    <property type="term" value="F:D-tyrosyl-tRNA(Tyr) deacylase activity"/>
    <property type="evidence" value="ECO:0007669"/>
    <property type="project" value="TreeGrafter"/>
</dbReference>
<dbReference type="GO" id="GO:0106026">
    <property type="term" value="F:Gly-tRNA(Ala) deacylase activity"/>
    <property type="evidence" value="ECO:0007669"/>
    <property type="project" value="UniProtKB-UniRule"/>
</dbReference>
<dbReference type="GO" id="GO:0043908">
    <property type="term" value="F:Ser(Gly)-tRNA(Ala) hydrolase activity"/>
    <property type="evidence" value="ECO:0007669"/>
    <property type="project" value="UniProtKB-UniRule"/>
</dbReference>
<dbReference type="GO" id="GO:0000049">
    <property type="term" value="F:tRNA binding"/>
    <property type="evidence" value="ECO:0007669"/>
    <property type="project" value="UniProtKB-UniRule"/>
</dbReference>
<dbReference type="GO" id="GO:0019478">
    <property type="term" value="P:D-amino acid catabolic process"/>
    <property type="evidence" value="ECO:0007669"/>
    <property type="project" value="UniProtKB-UniRule"/>
</dbReference>
<dbReference type="CDD" id="cd00563">
    <property type="entry name" value="Dtyr_deacylase"/>
    <property type="match status" value="1"/>
</dbReference>
<dbReference type="FunFam" id="3.50.80.10:FF:000001">
    <property type="entry name" value="D-aminoacyl-tRNA deacylase"/>
    <property type="match status" value="1"/>
</dbReference>
<dbReference type="Gene3D" id="3.50.80.10">
    <property type="entry name" value="D-tyrosyl-tRNA(Tyr) deacylase"/>
    <property type="match status" value="1"/>
</dbReference>
<dbReference type="HAMAP" id="MF_00518">
    <property type="entry name" value="Deacylase_Dtd"/>
    <property type="match status" value="1"/>
</dbReference>
<dbReference type="InterPro" id="IPR003732">
    <property type="entry name" value="Daa-tRNA_deacyls_DTD"/>
</dbReference>
<dbReference type="InterPro" id="IPR023509">
    <property type="entry name" value="DTD-like_sf"/>
</dbReference>
<dbReference type="NCBIfam" id="TIGR00256">
    <property type="entry name" value="D-aminoacyl-tRNA deacylase"/>
    <property type="match status" value="1"/>
</dbReference>
<dbReference type="PANTHER" id="PTHR10472:SF5">
    <property type="entry name" value="D-AMINOACYL-TRNA DEACYLASE 1"/>
    <property type="match status" value="1"/>
</dbReference>
<dbReference type="PANTHER" id="PTHR10472">
    <property type="entry name" value="D-TYROSYL-TRNA TYR DEACYLASE"/>
    <property type="match status" value="1"/>
</dbReference>
<dbReference type="Pfam" id="PF02580">
    <property type="entry name" value="Tyr_Deacylase"/>
    <property type="match status" value="1"/>
</dbReference>
<dbReference type="SUPFAM" id="SSF69500">
    <property type="entry name" value="DTD-like"/>
    <property type="match status" value="1"/>
</dbReference>
<name>DTD_CLOBL</name>
<feature type="chain" id="PRO_1000050826" description="D-aminoacyl-tRNA deacylase">
    <location>
        <begin position="1"/>
        <end position="149"/>
    </location>
</feature>
<feature type="short sequence motif" description="Gly-cisPro motif, important for rejection of L-amino acids" evidence="1">
    <location>
        <begin position="137"/>
        <end position="138"/>
    </location>
</feature>
<accession>A7GHS6</accession>
<proteinExistence type="inferred from homology"/>
<comment type="function">
    <text evidence="1">An aminoacyl-tRNA editing enzyme that deacylates mischarged D-aminoacyl-tRNAs. Also deacylates mischarged glycyl-tRNA(Ala), protecting cells against glycine mischarging by AlaRS. Acts via tRNA-based rather than protein-based catalysis; rejects L-amino acids rather than detecting D-amino acids in the active site. By recycling D-aminoacyl-tRNA to D-amino acids and free tRNA molecules, this enzyme counteracts the toxicity associated with the formation of D-aminoacyl-tRNA entities in vivo and helps enforce protein L-homochirality.</text>
</comment>
<comment type="catalytic activity">
    <reaction evidence="1">
        <text>glycyl-tRNA(Ala) + H2O = tRNA(Ala) + glycine + H(+)</text>
        <dbReference type="Rhea" id="RHEA:53744"/>
        <dbReference type="Rhea" id="RHEA-COMP:9657"/>
        <dbReference type="Rhea" id="RHEA-COMP:13640"/>
        <dbReference type="ChEBI" id="CHEBI:15377"/>
        <dbReference type="ChEBI" id="CHEBI:15378"/>
        <dbReference type="ChEBI" id="CHEBI:57305"/>
        <dbReference type="ChEBI" id="CHEBI:78442"/>
        <dbReference type="ChEBI" id="CHEBI:78522"/>
        <dbReference type="EC" id="3.1.1.96"/>
    </reaction>
</comment>
<comment type="catalytic activity">
    <reaction evidence="1">
        <text>a D-aminoacyl-tRNA + H2O = a tRNA + a D-alpha-amino acid + H(+)</text>
        <dbReference type="Rhea" id="RHEA:13953"/>
        <dbReference type="Rhea" id="RHEA-COMP:10123"/>
        <dbReference type="Rhea" id="RHEA-COMP:10124"/>
        <dbReference type="ChEBI" id="CHEBI:15377"/>
        <dbReference type="ChEBI" id="CHEBI:15378"/>
        <dbReference type="ChEBI" id="CHEBI:59871"/>
        <dbReference type="ChEBI" id="CHEBI:78442"/>
        <dbReference type="ChEBI" id="CHEBI:79333"/>
        <dbReference type="EC" id="3.1.1.96"/>
    </reaction>
</comment>
<comment type="subunit">
    <text evidence="1">Homodimer.</text>
</comment>
<comment type="subcellular location">
    <subcellularLocation>
        <location evidence="1">Cytoplasm</location>
    </subcellularLocation>
</comment>
<comment type="domain">
    <text evidence="1">A Gly-cisPro motif from one monomer fits into the active site of the other monomer to allow specific chiral rejection of L-amino acids.</text>
</comment>
<comment type="similarity">
    <text evidence="1">Belongs to the DTD family.</text>
</comment>
<sequence length="149" mass="16648">MRAVVQRVISSKVEVDGKVIGSIGKGLNVLLGISKEDTEEDIKYLKEKIINLRIFEDENEKLNKSLLDIGGDIIIVSQFTLYGDCRKGRRPSFIEALGGEEAYILYNKFVESIKKEVNNVATGEFGADMKVYIENDGPVTILLDSKKTF</sequence>
<keyword id="KW-0963">Cytoplasm</keyword>
<keyword id="KW-0378">Hydrolase</keyword>
<keyword id="KW-0694">RNA-binding</keyword>
<keyword id="KW-0820">tRNA-binding</keyword>